<organism>
    <name type="scientific">Mesocricetus auratus</name>
    <name type="common">Golden hamster</name>
    <dbReference type="NCBI Taxonomy" id="10036"/>
    <lineage>
        <taxon>Eukaryota</taxon>
        <taxon>Metazoa</taxon>
        <taxon>Chordata</taxon>
        <taxon>Craniata</taxon>
        <taxon>Vertebrata</taxon>
        <taxon>Euteleostomi</taxon>
        <taxon>Mammalia</taxon>
        <taxon>Eutheria</taxon>
        <taxon>Euarchontoglires</taxon>
        <taxon>Glires</taxon>
        <taxon>Rodentia</taxon>
        <taxon>Myomorpha</taxon>
        <taxon>Muroidea</taxon>
        <taxon>Cricetidae</taxon>
        <taxon>Cricetinae</taxon>
        <taxon>Mesocricetus</taxon>
    </lineage>
</organism>
<keyword id="KW-1003">Cell membrane</keyword>
<keyword id="KW-0968">Cytoplasmic vesicle</keyword>
<keyword id="KW-0407">Ion channel</keyword>
<keyword id="KW-0406">Ion transport</keyword>
<keyword id="KW-0472">Membrane</keyword>
<keyword id="KW-0628">Postsynaptic cell membrane</keyword>
<keyword id="KW-0630">Potassium</keyword>
<keyword id="KW-0633">Potassium transport</keyword>
<keyword id="KW-1185">Reference proteome</keyword>
<keyword id="KW-0770">Synapse</keyword>
<keyword id="KW-0812">Transmembrane</keyword>
<keyword id="KW-1133">Transmembrane helix</keyword>
<keyword id="KW-0813">Transport</keyword>
<keyword id="KW-0851">Voltage-gated channel</keyword>
<name>KCNJ4_MESAU</name>
<proteinExistence type="evidence at transcript level"/>
<sequence length="444" mass="49584">MHGHNRNGQAHVPRRKRRNRFVKKNGQCNVYFANLSNKSQRYMADIFTTCVDTRWRYMLMLFSAAFLVSWLFFGLLFWCIAFFHGDLEASPSVPAAGAPGGNGGAAPAAPKPCIMHVNGFLGAFLFSVETQTTIGYGFRCVTEECPLAVIAVVVQSIVGCVIDSFMIGTIMAKMARPKKRAQTLLFSHHAVISVRDGKLCLMWRVGNLRKSHIVEAHVRAQLIKPYMTQEGEYLPLDQRDLNVGYDIGLDRIFLVSPIIIVHEIDEDSPLYGMGKEELESEDFEIVVILEGMVEATAMTTQARSSYLASEILWGHRFEPVVFEEKSHYKVDYSRFHKTYEVAGTPCCSARELQESKITVLPAPPPPRSAFCYENELALMSQEEEEMEEEAAAAAAVAAGLGLEAGPKEEAGIIRMLEFGSHLDLERMQGTLPLDNISYRRESAI</sequence>
<evidence type="ECO:0000250" key="1"/>
<evidence type="ECO:0000250" key="2">
    <source>
        <dbReference type="UniProtKB" id="P48050"/>
    </source>
</evidence>
<evidence type="ECO:0000250" key="3">
    <source>
        <dbReference type="UniProtKB" id="P52189"/>
    </source>
</evidence>
<evidence type="ECO:0000250" key="4">
    <source>
        <dbReference type="UniProtKB" id="P52190"/>
    </source>
</evidence>
<evidence type="ECO:0000255" key="5"/>
<evidence type="ECO:0000305" key="6"/>
<gene>
    <name type="primary">KCNJ4</name>
    <name type="synonym">IRK3</name>
</gene>
<dbReference type="EMBL" id="S81773">
    <property type="protein sequence ID" value="AAB36376.1"/>
    <property type="molecule type" value="mRNA"/>
</dbReference>
<dbReference type="SMR" id="Q64198"/>
<dbReference type="STRING" id="10036.ENSMAUP00000023790"/>
<dbReference type="eggNOG" id="KOG3827">
    <property type="taxonomic scope" value="Eukaryota"/>
</dbReference>
<dbReference type="Proteomes" id="UP000189706">
    <property type="component" value="Unplaced"/>
</dbReference>
<dbReference type="GO" id="GO:0030659">
    <property type="term" value="C:cytoplasmic vesicle membrane"/>
    <property type="evidence" value="ECO:0007669"/>
    <property type="project" value="UniProtKB-SubCell"/>
</dbReference>
<dbReference type="GO" id="GO:0034702">
    <property type="term" value="C:monoatomic ion channel complex"/>
    <property type="evidence" value="ECO:0007669"/>
    <property type="project" value="UniProtKB-KW"/>
</dbReference>
<dbReference type="GO" id="GO:0045211">
    <property type="term" value="C:postsynaptic membrane"/>
    <property type="evidence" value="ECO:0007669"/>
    <property type="project" value="UniProtKB-SubCell"/>
</dbReference>
<dbReference type="GO" id="GO:0005242">
    <property type="term" value="F:inward rectifier potassium channel activity"/>
    <property type="evidence" value="ECO:0007669"/>
    <property type="project" value="InterPro"/>
</dbReference>
<dbReference type="GO" id="GO:1990573">
    <property type="term" value="P:potassium ion import across plasma membrane"/>
    <property type="evidence" value="ECO:0007669"/>
    <property type="project" value="TreeGrafter"/>
</dbReference>
<dbReference type="GO" id="GO:0034765">
    <property type="term" value="P:regulation of monoatomic ion transmembrane transport"/>
    <property type="evidence" value="ECO:0007669"/>
    <property type="project" value="TreeGrafter"/>
</dbReference>
<dbReference type="FunFam" id="1.10.287.70:FF:000039">
    <property type="entry name" value="ATP-sensitive inward rectifier potassium channel 12"/>
    <property type="match status" value="1"/>
</dbReference>
<dbReference type="FunFam" id="2.60.40.1400:FF:000001">
    <property type="entry name" value="G protein-activated inward rectifier potassium channel 2"/>
    <property type="match status" value="1"/>
</dbReference>
<dbReference type="Gene3D" id="1.10.287.70">
    <property type="match status" value="1"/>
</dbReference>
<dbReference type="Gene3D" id="2.60.40.1400">
    <property type="entry name" value="G protein-activated inward rectifier potassium channel 1"/>
    <property type="match status" value="1"/>
</dbReference>
<dbReference type="InterPro" id="IPR014756">
    <property type="entry name" value="Ig_E-set"/>
</dbReference>
<dbReference type="InterPro" id="IPR041647">
    <property type="entry name" value="IRK_C"/>
</dbReference>
<dbReference type="InterPro" id="IPR016449">
    <property type="entry name" value="K_chnl_inward-rec_Kir"/>
</dbReference>
<dbReference type="InterPro" id="IPR003273">
    <property type="entry name" value="K_chnl_inward-rec_Kir2.3"/>
</dbReference>
<dbReference type="InterPro" id="IPR013518">
    <property type="entry name" value="K_chnl_inward-rec_Kir_cyto"/>
</dbReference>
<dbReference type="InterPro" id="IPR040445">
    <property type="entry name" value="Kir_TM"/>
</dbReference>
<dbReference type="PANTHER" id="PTHR11767">
    <property type="entry name" value="INWARD RECTIFIER POTASSIUM CHANNEL"/>
    <property type="match status" value="1"/>
</dbReference>
<dbReference type="PANTHER" id="PTHR11767:SF53">
    <property type="entry name" value="INWARD RECTIFIER POTASSIUM CHANNEL 4"/>
    <property type="match status" value="1"/>
</dbReference>
<dbReference type="Pfam" id="PF01007">
    <property type="entry name" value="IRK"/>
    <property type="match status" value="1"/>
</dbReference>
<dbReference type="Pfam" id="PF17655">
    <property type="entry name" value="IRK_C"/>
    <property type="match status" value="1"/>
</dbReference>
<dbReference type="PIRSF" id="PIRSF005465">
    <property type="entry name" value="GIRK_kir"/>
    <property type="match status" value="1"/>
</dbReference>
<dbReference type="PRINTS" id="PR01326">
    <property type="entry name" value="KIR23CHANNEL"/>
</dbReference>
<dbReference type="PRINTS" id="PR01320">
    <property type="entry name" value="KIRCHANNEL"/>
</dbReference>
<dbReference type="SUPFAM" id="SSF81296">
    <property type="entry name" value="E set domains"/>
    <property type="match status" value="1"/>
</dbReference>
<dbReference type="SUPFAM" id="SSF81324">
    <property type="entry name" value="Voltage-gated potassium channels"/>
    <property type="match status" value="1"/>
</dbReference>
<reference key="1">
    <citation type="journal article" date="1996" name="J. Neurosci.">
        <title>A strongly inwardly rectifying K+ channel that is sensitive to ATP.</title>
        <authorList>
            <person name="Collins A."/>
            <person name="German M.S."/>
            <person name="Jan Y.N."/>
            <person name="Jan L.Y."/>
            <person name="Zhao B."/>
        </authorList>
    </citation>
    <scope>NUCLEOTIDE SEQUENCE [MRNA]</scope>
    <source>
        <tissue>Insulinoma</tissue>
    </source>
</reference>
<accession>Q64198</accession>
<protein>
    <recommendedName>
        <fullName>Inward rectifier potassium channel 4</fullName>
    </recommendedName>
    <alternativeName>
        <fullName>Inward rectifier K(+) channel Kir2.3</fullName>
        <shortName>IRK-3</shortName>
    </alternativeName>
    <alternativeName>
        <fullName>Potassium channel, inwardly rectifying subfamily J member 4</fullName>
    </alternativeName>
</protein>
<comment type="function">
    <text evidence="2">Inward rectifier potassium channels are characterized by a greater tendency to allow potassium to flow into the cell rather than out of it. Their voltage dependence is regulated by the concentration of extracellular potassium; as external potassium is raised, the voltage range of the channel opening shifts to more positive voltages. The inward rectification is mainly due to the blockage of outward current by internal magnesium. Can be blocked by extracellular barium and cesium.</text>
</comment>
<comment type="catalytic activity">
    <reaction evidence="2">
        <text>K(+)(in) = K(+)(out)</text>
        <dbReference type="Rhea" id="RHEA:29463"/>
        <dbReference type="ChEBI" id="CHEBI:29103"/>
    </reaction>
</comment>
<comment type="subunit">
    <text evidence="2 3 4">Homomultimeric and heteromultimeric association with KCNJ2 and KCNJ12. Interacts with DLG2 and DLG4. Associates, via its PDZ-recognition domain, with a complex containing LIN7A, LIN7B, LIN7C, DLG1, CASK and APBA1. Interacts with TAX1BP3. TAX1BP3 competes with LIN7 family members for KCNJ4 binding.</text>
</comment>
<comment type="subcellular location">
    <subcellularLocation>
        <location evidence="3">Cell membrane</location>
        <topology evidence="5">Multi-pass membrane protein</topology>
    </subcellularLocation>
    <subcellularLocation>
        <location evidence="3">Postsynaptic cell membrane</location>
        <topology evidence="5">Multi-pass membrane protein</topology>
    </subcellularLocation>
    <subcellularLocation>
        <location evidence="3">Cytoplasmic vesicle membrane</location>
    </subcellularLocation>
    <text evidence="3">TAX1BP3 binding promotes dissociation of KCNJ4 from LIN7 famaly members and KCNJ4 internalization.</text>
</comment>
<comment type="similarity">
    <text evidence="6">Belongs to the inward rectifier-type potassium channel (TC 1.A.2.1) family. KCNJ4 subfamily.</text>
</comment>
<feature type="chain" id="PRO_0000154931" description="Inward rectifier potassium channel 4">
    <location>
        <begin position="1"/>
        <end position="444"/>
    </location>
</feature>
<feature type="topological domain" description="Cytoplasmic" evidence="1">
    <location>
        <begin position="1"/>
        <end position="55"/>
    </location>
</feature>
<feature type="transmembrane region" description="Helical; Name=M1" evidence="1">
    <location>
        <begin position="56"/>
        <end position="80"/>
    </location>
</feature>
<feature type="topological domain" description="Extracellular" evidence="1">
    <location>
        <begin position="81"/>
        <end position="119"/>
    </location>
</feature>
<feature type="intramembrane region" description="Helical; Pore-forming; Name=H5" evidence="1">
    <location>
        <begin position="120"/>
        <end position="131"/>
    </location>
</feature>
<feature type="intramembrane region" description="Pore-forming" evidence="1">
    <location>
        <begin position="132"/>
        <end position="138"/>
    </location>
</feature>
<feature type="topological domain" description="Extracellular" evidence="1">
    <location>
        <begin position="139"/>
        <end position="147"/>
    </location>
</feature>
<feature type="transmembrane region" description="Helical; Name=M2" evidence="1">
    <location>
        <begin position="148"/>
        <end position="169"/>
    </location>
</feature>
<feature type="topological domain" description="Cytoplasmic" evidence="1">
    <location>
        <begin position="170"/>
        <end position="444"/>
    </location>
</feature>
<feature type="short sequence motif" description="Selectivity filter" evidence="1">
    <location>
        <begin position="133"/>
        <end position="138"/>
    </location>
</feature>
<feature type="short sequence motif" description="PDZ-binding" evidence="5">
    <location>
        <begin position="442"/>
        <end position="444"/>
    </location>
</feature>
<feature type="site" description="Role in the control of polyamine-mediated channel gating and in the blocking by intracellular magnesium" evidence="1">
    <location>
        <position position="163"/>
    </location>
</feature>